<dbReference type="EC" id="3.4.19.3" evidence="1"/>
<dbReference type="EMBL" id="CP000790">
    <property type="protein sequence ID" value="ABU73342.1"/>
    <property type="molecule type" value="Genomic_DNA"/>
</dbReference>
<dbReference type="RefSeq" id="WP_012129102.1">
    <property type="nucleotide sequence ID" value="NC_022270.1"/>
</dbReference>
<dbReference type="SMR" id="A7N3R7"/>
<dbReference type="MEROPS" id="C15.001"/>
<dbReference type="KEGG" id="vha:VIBHAR_05437"/>
<dbReference type="PATRIC" id="fig|338187.25.peg.4807"/>
<dbReference type="Proteomes" id="UP000008152">
    <property type="component" value="Chromosome II"/>
</dbReference>
<dbReference type="GO" id="GO:0005829">
    <property type="term" value="C:cytosol"/>
    <property type="evidence" value="ECO:0007669"/>
    <property type="project" value="InterPro"/>
</dbReference>
<dbReference type="GO" id="GO:0016920">
    <property type="term" value="F:pyroglutamyl-peptidase activity"/>
    <property type="evidence" value="ECO:0007669"/>
    <property type="project" value="UniProtKB-UniRule"/>
</dbReference>
<dbReference type="GO" id="GO:0006508">
    <property type="term" value="P:proteolysis"/>
    <property type="evidence" value="ECO:0007669"/>
    <property type="project" value="UniProtKB-KW"/>
</dbReference>
<dbReference type="CDD" id="cd00501">
    <property type="entry name" value="Peptidase_C15"/>
    <property type="match status" value="1"/>
</dbReference>
<dbReference type="FunFam" id="3.40.630.20:FF:000001">
    <property type="entry name" value="Pyrrolidone-carboxylate peptidase"/>
    <property type="match status" value="1"/>
</dbReference>
<dbReference type="Gene3D" id="3.40.630.20">
    <property type="entry name" value="Peptidase C15, pyroglutamyl peptidase I-like"/>
    <property type="match status" value="1"/>
</dbReference>
<dbReference type="HAMAP" id="MF_00417">
    <property type="entry name" value="Pyrrolid_peptidase"/>
    <property type="match status" value="1"/>
</dbReference>
<dbReference type="InterPro" id="IPR000816">
    <property type="entry name" value="Peptidase_C15"/>
</dbReference>
<dbReference type="InterPro" id="IPR016125">
    <property type="entry name" value="Peptidase_C15-like"/>
</dbReference>
<dbReference type="InterPro" id="IPR036440">
    <property type="entry name" value="Peptidase_C15-like_sf"/>
</dbReference>
<dbReference type="InterPro" id="IPR029762">
    <property type="entry name" value="PGP-I_bact-type"/>
</dbReference>
<dbReference type="InterPro" id="IPR033694">
    <property type="entry name" value="PGPEP1_Cys_AS"/>
</dbReference>
<dbReference type="InterPro" id="IPR033693">
    <property type="entry name" value="PGPEP1_Glu_AS"/>
</dbReference>
<dbReference type="NCBIfam" id="NF009676">
    <property type="entry name" value="PRK13197.1"/>
    <property type="match status" value="1"/>
</dbReference>
<dbReference type="NCBIfam" id="TIGR00504">
    <property type="entry name" value="pyro_pdase"/>
    <property type="match status" value="1"/>
</dbReference>
<dbReference type="PANTHER" id="PTHR23402">
    <property type="entry name" value="PROTEASE FAMILY C15 PYROGLUTAMYL-PEPTIDASE I-RELATED"/>
    <property type="match status" value="1"/>
</dbReference>
<dbReference type="PANTHER" id="PTHR23402:SF1">
    <property type="entry name" value="PYROGLUTAMYL-PEPTIDASE I"/>
    <property type="match status" value="1"/>
</dbReference>
<dbReference type="Pfam" id="PF01470">
    <property type="entry name" value="Peptidase_C15"/>
    <property type="match status" value="1"/>
</dbReference>
<dbReference type="PIRSF" id="PIRSF015592">
    <property type="entry name" value="Prld-crbxl_pptds"/>
    <property type="match status" value="1"/>
</dbReference>
<dbReference type="PRINTS" id="PR00706">
    <property type="entry name" value="PYROGLUPTASE"/>
</dbReference>
<dbReference type="SUPFAM" id="SSF53182">
    <property type="entry name" value="Pyrrolidone carboxyl peptidase (pyroglutamate aminopeptidase)"/>
    <property type="match status" value="1"/>
</dbReference>
<dbReference type="PROSITE" id="PS01334">
    <property type="entry name" value="PYRASE_CYS"/>
    <property type="match status" value="1"/>
</dbReference>
<dbReference type="PROSITE" id="PS01333">
    <property type="entry name" value="PYRASE_GLU"/>
    <property type="match status" value="1"/>
</dbReference>
<sequence>MKKVLMTGFEPFGGESINPALEAVKRLDGKKLDGGEVMICQVPVTRYESIDTVVNAIEQYQPDIVITVGQAAGRAAITPERVAINVDDFRIPDNGGHQPIDEPVILDGPDAYFTTLPIKAITSALHKASIPCQVSNTAGTFVCNHLFYGIQHYLRDKSVRHGFVHIPLLPEQDASGNQPTMSLDLIVEGLALLAQAVIDNESDVAITAGQIC</sequence>
<name>PCP_VIBC1</name>
<proteinExistence type="inferred from homology"/>
<evidence type="ECO:0000255" key="1">
    <source>
        <dbReference type="HAMAP-Rule" id="MF_00417"/>
    </source>
</evidence>
<reference key="1">
    <citation type="submission" date="2007-08" db="EMBL/GenBank/DDBJ databases">
        <authorList>
            <consortium name="The Vibrio harveyi Genome Sequencing Project"/>
            <person name="Bassler B."/>
            <person name="Clifton S.W."/>
            <person name="Fulton L."/>
            <person name="Delehaunty K."/>
            <person name="Fronick C."/>
            <person name="Harrison M."/>
            <person name="Markivic C."/>
            <person name="Fulton R."/>
            <person name="Tin-Wollam A.-M."/>
            <person name="Shah N."/>
            <person name="Pepin K."/>
            <person name="Nash W."/>
            <person name="Thiruvilangam P."/>
            <person name="Bhonagiri V."/>
            <person name="Waters C."/>
            <person name="Tu K.C."/>
            <person name="Irgon J."/>
            <person name="Wilson R.K."/>
        </authorList>
    </citation>
    <scope>NUCLEOTIDE SEQUENCE [LARGE SCALE GENOMIC DNA]</scope>
    <source>
        <strain>ATCC BAA-1116 / BB120</strain>
    </source>
</reference>
<keyword id="KW-0963">Cytoplasm</keyword>
<keyword id="KW-0378">Hydrolase</keyword>
<keyword id="KW-0645">Protease</keyword>
<keyword id="KW-0788">Thiol protease</keyword>
<protein>
    <recommendedName>
        <fullName evidence="1">Pyrrolidone-carboxylate peptidase</fullName>
        <ecNumber evidence="1">3.4.19.3</ecNumber>
    </recommendedName>
    <alternativeName>
        <fullName evidence="1">5-oxoprolyl-peptidase</fullName>
    </alternativeName>
    <alternativeName>
        <fullName evidence="1">Pyroglutamyl-peptidase I</fullName>
        <shortName evidence="1">PGP-I</shortName>
        <shortName evidence="1">Pyrase</shortName>
    </alternativeName>
</protein>
<gene>
    <name evidence="1" type="primary">pcp</name>
    <name type="ordered locus">VIBHAR_05437</name>
</gene>
<comment type="function">
    <text evidence="1">Removes 5-oxoproline from various penultimate amino acid residues except L-proline.</text>
</comment>
<comment type="catalytic activity">
    <reaction evidence="1">
        <text>Release of an N-terminal pyroglutamyl group from a polypeptide, the second amino acid generally not being Pro.</text>
        <dbReference type="EC" id="3.4.19.3"/>
    </reaction>
</comment>
<comment type="subunit">
    <text evidence="1">Homotetramer.</text>
</comment>
<comment type="subcellular location">
    <subcellularLocation>
        <location evidence="1">Cytoplasm</location>
    </subcellularLocation>
</comment>
<comment type="similarity">
    <text evidence="1">Belongs to the peptidase C15 family.</text>
</comment>
<organism>
    <name type="scientific">Vibrio campbellii (strain ATCC BAA-1116)</name>
    <dbReference type="NCBI Taxonomy" id="2902295"/>
    <lineage>
        <taxon>Bacteria</taxon>
        <taxon>Pseudomonadati</taxon>
        <taxon>Pseudomonadota</taxon>
        <taxon>Gammaproteobacteria</taxon>
        <taxon>Vibrionales</taxon>
        <taxon>Vibrionaceae</taxon>
        <taxon>Vibrio</taxon>
    </lineage>
</organism>
<feature type="chain" id="PRO_1000050154" description="Pyrrolidone-carboxylate peptidase">
    <location>
        <begin position="1"/>
        <end position="212"/>
    </location>
</feature>
<feature type="active site" evidence="1">
    <location>
        <position position="80"/>
    </location>
</feature>
<feature type="active site" evidence="1">
    <location>
        <position position="143"/>
    </location>
</feature>
<feature type="active site" evidence="1">
    <location>
        <position position="165"/>
    </location>
</feature>
<accession>A7N3R7</accession>